<keyword id="KW-0238">DNA-binding</keyword>
<keyword id="KW-1185">Reference proteome</keyword>
<keyword id="KW-0731">Sigma factor</keyword>
<keyword id="KW-0804">Transcription</keyword>
<keyword id="KW-0805">Transcription regulation</keyword>
<protein>
    <recommendedName>
        <fullName>ECF RNA polymerase sigma factor SigK</fullName>
        <shortName>ECF sigma factor SigK</shortName>
    </recommendedName>
    <alternativeName>
        <fullName>Alternative RNA polymerase sigma factor SigK</fullName>
    </alternativeName>
    <alternativeName>
        <fullName>RNA polymerase sigma-K factor</fullName>
        <shortName>Sigma-K factor</shortName>
    </alternativeName>
</protein>
<comment type="function">
    <text evidence="1">Sigma factors are initiation factors that promote the attachment of RNA polymerase to specific initiation sites and are then released. Extracytoplasmic function (ECF) sigma factors are held in an inactive form by an anti-sigma factor until released by regulated intramembrane proteolysis (By similarity).</text>
</comment>
<comment type="subunit">
    <text evidence="1">Interacts transiently with the RNA polymerase catalytic core formed by RpoA, RpoB, RpoC and RpoZ (2 alpha, 1 beta, 1 beta' and 1 omega subunit) to form the RNA polymerase holoenzyme that can initiate transcription. Interacts (via sigma-70 factor domain 4) with anti-sigma-K factor RskA (By similarity).</text>
</comment>
<comment type="domain">
    <text evidence="1">The sigma-70 factor domain-2 mediates sequence-specific interaction with the -10 element in promoter DNA, and plays an important role in melting the double-stranded DNA and the formation of the transcription bubble. The sigma-70 factor domain-2 mediates interaction with the RNA polymerase subunits RpoB and RpoC (By similarity).</text>
</comment>
<comment type="domain">
    <text evidence="1">The sigma-70 factor domain-4 contains a helix-turn-helix (H-T-H) motif that mediates interaction with the -35 element in promoter DNA. The domain also mediates interaction with the RNA polymerase subunit RpoA. Interactions between sigma-70 factor domain-4 and anti-sigma factors prevents interaction of sigma factors with the RNA polymerase catalytic core (By similarity).</text>
</comment>
<comment type="miscellaneous">
    <text evidence="1">Extracytoplasmic function (ECF) sigma factors are held in an inactive form by an anti-sigma factor until released by regulated intramembrane proteolysis (RIP). RIP occurs when an extracytoplasmic signal triggers a concerted proteolytic cascade to transmit information and elicit cellular responses. The membrane-spanning anti-sigma factor is first cut extracytoplasmically (site-1 protease, S1P), then within the membrane itself (site-2 protease, S2P, Rip1), while cytoplasmic proteases finish degrading the regulatory protein, liberating SigK (By similarity).</text>
</comment>
<comment type="similarity">
    <text evidence="2">Belongs to the sigma-70 factor family. ECF subfamily.</text>
</comment>
<organism>
    <name type="scientific">Mycobacterium bovis (strain ATCC BAA-935 / AF2122/97)</name>
    <dbReference type="NCBI Taxonomy" id="233413"/>
    <lineage>
        <taxon>Bacteria</taxon>
        <taxon>Bacillati</taxon>
        <taxon>Actinomycetota</taxon>
        <taxon>Actinomycetes</taxon>
        <taxon>Mycobacteriales</taxon>
        <taxon>Mycobacteriaceae</taxon>
        <taxon>Mycobacterium</taxon>
        <taxon>Mycobacterium tuberculosis complex</taxon>
    </lineage>
</organism>
<feature type="chain" id="PRO_0000313839" description="ECF RNA polymerase sigma factor SigK">
    <location>
        <begin position="1"/>
        <end position="187"/>
    </location>
</feature>
<feature type="DNA-binding region" description="H-T-H motif" evidence="1">
    <location>
        <begin position="155"/>
        <end position="174"/>
    </location>
</feature>
<feature type="region of interest" description="Sigma-70 factor domain-2">
    <location>
        <begin position="30"/>
        <end position="96"/>
    </location>
</feature>
<feature type="region of interest" description="Sigma-70 factor domain-4">
    <location>
        <begin position="133"/>
        <end position="182"/>
    </location>
</feature>
<feature type="short sequence motif" description="Interaction with polymerase core subunit RpoC">
    <location>
        <begin position="53"/>
        <end position="56"/>
    </location>
</feature>
<proteinExistence type="inferred from homology"/>
<reference key="1">
    <citation type="journal article" date="2003" name="Proc. Natl. Acad. Sci. U.S.A.">
        <title>The complete genome sequence of Mycobacterium bovis.</title>
        <authorList>
            <person name="Garnier T."/>
            <person name="Eiglmeier K."/>
            <person name="Camus J.-C."/>
            <person name="Medina N."/>
            <person name="Mansoor H."/>
            <person name="Pryor M."/>
            <person name="Duthoy S."/>
            <person name="Grondin S."/>
            <person name="Lacroix C."/>
            <person name="Monsempe C."/>
            <person name="Simon S."/>
            <person name="Harris B."/>
            <person name="Atkin R."/>
            <person name="Doggett J."/>
            <person name="Mayes R."/>
            <person name="Keating L."/>
            <person name="Wheeler P.R."/>
            <person name="Parkhill J."/>
            <person name="Barrell B.G."/>
            <person name="Cole S.T."/>
            <person name="Gordon S.V."/>
            <person name="Hewinson R.G."/>
        </authorList>
    </citation>
    <scope>NUCLEOTIDE SEQUENCE [LARGE SCALE GENOMIC DNA]</scope>
    <source>
        <strain>ATCC BAA-935 / AF2122/97</strain>
    </source>
</reference>
<reference key="2">
    <citation type="journal article" date="2017" name="Genome Announc.">
        <title>Updated reference genome sequence and annotation of Mycobacterium bovis AF2122/97.</title>
        <authorList>
            <person name="Malone K.M."/>
            <person name="Farrell D."/>
            <person name="Stuber T.P."/>
            <person name="Schubert O.T."/>
            <person name="Aebersold R."/>
            <person name="Robbe-Austerman S."/>
            <person name="Gordon S.V."/>
        </authorList>
    </citation>
    <scope>NUCLEOTIDE SEQUENCE [LARGE SCALE GENOMIC DNA]</scope>
    <scope>GENOME REANNOTATION</scope>
    <source>
        <strain>ATCC BAA-935 / AF2122/97</strain>
    </source>
</reference>
<dbReference type="EMBL" id="LT708304">
    <property type="protein sequence ID" value="SIT99041.1"/>
    <property type="molecule type" value="Genomic_DNA"/>
</dbReference>
<dbReference type="RefSeq" id="NP_854116.1">
    <property type="nucleotide sequence ID" value="NC_002945.3"/>
</dbReference>
<dbReference type="RefSeq" id="WP_003402246.1">
    <property type="nucleotide sequence ID" value="NC_002945.4"/>
</dbReference>
<dbReference type="SMR" id="Q7U1Z6"/>
<dbReference type="PATRIC" id="fig|233413.5.peg.493"/>
<dbReference type="Proteomes" id="UP000001419">
    <property type="component" value="Chromosome"/>
</dbReference>
<dbReference type="GO" id="GO:0003677">
    <property type="term" value="F:DNA binding"/>
    <property type="evidence" value="ECO:0007669"/>
    <property type="project" value="UniProtKB-KW"/>
</dbReference>
<dbReference type="GO" id="GO:0016987">
    <property type="term" value="F:sigma factor activity"/>
    <property type="evidence" value="ECO:0007669"/>
    <property type="project" value="UniProtKB-KW"/>
</dbReference>
<dbReference type="GO" id="GO:0006352">
    <property type="term" value="P:DNA-templated transcription initiation"/>
    <property type="evidence" value="ECO:0007669"/>
    <property type="project" value="InterPro"/>
</dbReference>
<dbReference type="CDD" id="cd06171">
    <property type="entry name" value="Sigma70_r4"/>
    <property type="match status" value="1"/>
</dbReference>
<dbReference type="FunFam" id="1.10.1740.10:FF:000021">
    <property type="entry name" value="ECF RNA polymerase sigma factor SigK"/>
    <property type="match status" value="1"/>
</dbReference>
<dbReference type="Gene3D" id="1.10.1740.10">
    <property type="match status" value="1"/>
</dbReference>
<dbReference type="Gene3D" id="1.10.10.10">
    <property type="entry name" value="Winged helix-like DNA-binding domain superfamily/Winged helix DNA-binding domain"/>
    <property type="match status" value="1"/>
</dbReference>
<dbReference type="InterPro" id="IPR039425">
    <property type="entry name" value="RNA_pol_sigma-70-like"/>
</dbReference>
<dbReference type="InterPro" id="IPR014284">
    <property type="entry name" value="RNA_pol_sigma-70_dom"/>
</dbReference>
<dbReference type="InterPro" id="IPR007627">
    <property type="entry name" value="RNA_pol_sigma70_r2"/>
</dbReference>
<dbReference type="InterPro" id="IPR007630">
    <property type="entry name" value="RNA_pol_sigma70_r4"/>
</dbReference>
<dbReference type="InterPro" id="IPR013325">
    <property type="entry name" value="RNA_pol_sigma_r2"/>
</dbReference>
<dbReference type="InterPro" id="IPR013324">
    <property type="entry name" value="RNA_pol_sigma_r3/r4-like"/>
</dbReference>
<dbReference type="InterPro" id="IPR036388">
    <property type="entry name" value="WH-like_DNA-bd_sf"/>
</dbReference>
<dbReference type="NCBIfam" id="NF007228">
    <property type="entry name" value="PRK09646.1"/>
    <property type="match status" value="1"/>
</dbReference>
<dbReference type="NCBIfam" id="TIGR02937">
    <property type="entry name" value="sigma70-ECF"/>
    <property type="match status" value="1"/>
</dbReference>
<dbReference type="PANTHER" id="PTHR43133:SF66">
    <property type="entry name" value="ECF RNA POLYMERASE SIGMA FACTOR SIGK"/>
    <property type="match status" value="1"/>
</dbReference>
<dbReference type="PANTHER" id="PTHR43133">
    <property type="entry name" value="RNA POLYMERASE ECF-TYPE SIGMA FACTO"/>
    <property type="match status" value="1"/>
</dbReference>
<dbReference type="Pfam" id="PF04542">
    <property type="entry name" value="Sigma70_r2"/>
    <property type="match status" value="1"/>
</dbReference>
<dbReference type="Pfam" id="PF04545">
    <property type="entry name" value="Sigma70_r4"/>
    <property type="match status" value="1"/>
</dbReference>
<dbReference type="SUPFAM" id="SSF88946">
    <property type="entry name" value="Sigma2 domain of RNA polymerase sigma factors"/>
    <property type="match status" value="1"/>
</dbReference>
<dbReference type="SUPFAM" id="SSF88659">
    <property type="entry name" value="Sigma3 and sigma4 domains of RNA polymerase sigma factors"/>
    <property type="match status" value="1"/>
</dbReference>
<gene>
    <name type="primary">sigK</name>
    <name type="ordered locus">BQ2027_MB0453C</name>
</gene>
<evidence type="ECO:0000250" key="1"/>
<evidence type="ECO:0000305" key="2"/>
<name>SIGK_MYCBO</name>
<accession>Q7U1Z6</accession>
<accession>A0A1R3XVF2</accession>
<accession>X2BF30</accession>
<sequence length="187" mass="21035">MTGPPRLSSDLDALLRRVAGHDQAAFAEFYDHTKSRVYGLVMRVLRDTGYSEETTQEIYLEVWRNASEFDSAKGSALAWLLTMAHRRAVDRVRCEQAGNQREVRYGAANVDPASDVVADLAIAGDERRRVTECLKALTDTQRQCIELAYYGGLTYVEVSRRLAANLSTIKSRMRDALRSLRNCLDVS</sequence>